<reference key="1">
    <citation type="journal article" date="2007" name="Theor. Appl. Genet.">
        <title>Complete chloroplast genome sequences of Hordeum vulgare, Sorghum bicolor and Agrostis stolonifera, and comparative analyses with other grass genomes.</title>
        <authorList>
            <person name="Saski C."/>
            <person name="Lee S.-B."/>
            <person name="Fjellheim S."/>
            <person name="Guda C."/>
            <person name="Jansen R.K."/>
            <person name="Luo H."/>
            <person name="Tomkins J."/>
            <person name="Rognli O.A."/>
            <person name="Daniell H."/>
            <person name="Clarke J.L."/>
        </authorList>
    </citation>
    <scope>NUCLEOTIDE SEQUENCE [LARGE SCALE GENOMIC DNA]</scope>
    <source>
        <strain>cv. BTx623</strain>
    </source>
</reference>
<evidence type="ECO:0000255" key="1">
    <source>
        <dbReference type="HAMAP-Rule" id="MF_01321"/>
    </source>
</evidence>
<organism>
    <name type="scientific">Sorghum bicolor</name>
    <name type="common">Sorghum</name>
    <name type="synonym">Sorghum vulgare</name>
    <dbReference type="NCBI Taxonomy" id="4558"/>
    <lineage>
        <taxon>Eukaryota</taxon>
        <taxon>Viridiplantae</taxon>
        <taxon>Streptophyta</taxon>
        <taxon>Embryophyta</taxon>
        <taxon>Tracheophyta</taxon>
        <taxon>Spermatophyta</taxon>
        <taxon>Magnoliopsida</taxon>
        <taxon>Liliopsida</taxon>
        <taxon>Poales</taxon>
        <taxon>Poaceae</taxon>
        <taxon>PACMAD clade</taxon>
        <taxon>Panicoideae</taxon>
        <taxon>Andropogonodae</taxon>
        <taxon>Andropogoneae</taxon>
        <taxon>Sorghinae</taxon>
        <taxon>Sorghum</taxon>
    </lineage>
</organism>
<geneLocation type="chloroplast"/>
<proteinExistence type="inferred from homology"/>
<comment type="function">
    <text evidence="1">DNA-dependent RNA polymerase catalyzes the transcription of DNA into RNA using the four ribonucleoside triphosphates as substrates.</text>
</comment>
<comment type="catalytic activity">
    <reaction evidence="1">
        <text>RNA(n) + a ribonucleoside 5'-triphosphate = RNA(n+1) + diphosphate</text>
        <dbReference type="Rhea" id="RHEA:21248"/>
        <dbReference type="Rhea" id="RHEA-COMP:14527"/>
        <dbReference type="Rhea" id="RHEA-COMP:17342"/>
        <dbReference type="ChEBI" id="CHEBI:33019"/>
        <dbReference type="ChEBI" id="CHEBI:61557"/>
        <dbReference type="ChEBI" id="CHEBI:140395"/>
        <dbReference type="EC" id="2.7.7.6"/>
    </reaction>
</comment>
<comment type="subunit">
    <text evidence="1">In plastids the minimal PEP RNA polymerase catalytic core is composed of four subunits: alpha, beta, beta', and beta''. When a (nuclear-encoded) sigma factor is associated with the core the holoenzyme is formed, which can initiate transcription.</text>
</comment>
<comment type="subcellular location">
    <subcellularLocation>
        <location>Plastid</location>
        <location>Chloroplast</location>
    </subcellularLocation>
</comment>
<comment type="similarity">
    <text evidence="1">Belongs to the RNA polymerase beta chain family.</text>
</comment>
<protein>
    <recommendedName>
        <fullName evidence="1">DNA-directed RNA polymerase subunit beta</fullName>
        <ecNumber evidence="1">2.7.7.6</ecNumber>
    </recommendedName>
    <alternativeName>
        <fullName evidence="1">PEP</fullName>
    </alternativeName>
    <alternativeName>
        <fullName evidence="1">Plastid-encoded RNA polymerase subunit beta</fullName>
        <shortName evidence="1">RNA polymerase subunit beta</shortName>
    </alternativeName>
</protein>
<feature type="chain" id="PRO_0000276597" description="DNA-directed RNA polymerase subunit beta">
    <location>
        <begin position="1"/>
        <end position="1075"/>
    </location>
</feature>
<name>RPOB_SORBI</name>
<sequence>MLRNGNEGMSTIPGFSQIQFEGFCRFINQGLAEELEKFPTIKDPDHEIAFQLFAKGYQLLEPSIKERNAVYESLTYSSELYVSARLIFGFDVQKQTISIGNIPIMNSLGTFIINGIYRIVINQILLSPGIYYRSELDHKGISIYTGTIISDWGGRSELAIDKKERIWARVSRKQKISILVLSSAMGSNLREILDNVSYPEIFLSFPNAKEKKRIESKEKAILEFYQQFACVGGDLVFSESLCEELQKKFFQQKCELGRVGRRNMNRRLNLDIPQNNTFLLPRDVLAATDHLIGMKFGTGILDDDDMNHLKNKRIRSVADLLQDQFGLALGRLQHAVQKTIRRVFIRQSKPTPQTLVTPTSTSILLITTYETFFGTYPLAQVFDQTNPLTQTVHGRKVSCLGPGGLTGRTASFRSRDIHPSHYGRICPIDTSEGINVGLTGSLAIHARIDHWWGSIESPFYEISEKAKEKKERQVVYLSPNRDEYYMIAAGNSLSLNQGIQEEQVVPARYRQEFLTIAWEQIHVRSIFPFQYFSIGGSLIPFIEHNDANRALMSSNMQRQAVPLSRSEKCIVGTGLERQTALDSRVSVIAEREGKIISSDSHKILLSSSGKTISIPLVAHRRSNKNTCMHQKPRVPRGKSIKKGQILAEGAATVGGELALGKNVLVAYMPWEGYNFEDAVLISERLVYEDIYTSFHIRKYEIQTDTTSQGSAEKITKQIPHLEEHLLRNLDRNGVVRLGSWVETGDILVGKLTPQIASESSYIAEAGLLRAIFGLEVSTSKETSLKLPIGGRGRVIDVKWIQRDPFDIMVRVYILQKREIKVGDKVAGRHGNKGIISKILPRQDMPYLQDGTPVDMVFNPLGVPSRMNVGQIFESSLGLAGDLLKKHYRIAPFDERYEQEASRKLVFSELYEASKQTKNPWVFEPEYPGKSRIFDGRTGDPFEQPVLIGKSYILKLIHQVDEKIHGRSTGPYSLVTQQPVRGRAKQGGQRIGEMEVWALEGFGVAHILQEILTYKSDHLIARQEILNATIWGKRVPNHEDPPESFRVLVRELRSLALELNHFLVSEKNFRVNREDV</sequence>
<dbReference type="EC" id="2.7.7.6" evidence="1"/>
<dbReference type="EMBL" id="EF115542">
    <property type="protein sequence ID" value="ABK79486.1"/>
    <property type="molecule type" value="Genomic_DNA"/>
</dbReference>
<dbReference type="RefSeq" id="YP_899397.1">
    <property type="nucleotide sequence ID" value="NC_008602.1"/>
</dbReference>
<dbReference type="SMR" id="A1E9R4"/>
<dbReference type="FunCoup" id="A1E9R4">
    <property type="interactions" value="203"/>
</dbReference>
<dbReference type="STRING" id="4558.A1E9R4"/>
<dbReference type="GeneID" id="4549132"/>
<dbReference type="KEGG" id="sbi:4549132"/>
<dbReference type="eggNOG" id="KOG0214">
    <property type="taxonomic scope" value="Eukaryota"/>
</dbReference>
<dbReference type="InParanoid" id="A1E9R4"/>
<dbReference type="OrthoDB" id="5869532at2759"/>
<dbReference type="Proteomes" id="UP000000768">
    <property type="component" value="Chloroplast"/>
</dbReference>
<dbReference type="ExpressionAtlas" id="A1E9R4">
    <property type="expression patterns" value="baseline and differential"/>
</dbReference>
<dbReference type="GO" id="GO:0009507">
    <property type="term" value="C:chloroplast"/>
    <property type="evidence" value="ECO:0007669"/>
    <property type="project" value="UniProtKB-SubCell"/>
</dbReference>
<dbReference type="GO" id="GO:0000428">
    <property type="term" value="C:DNA-directed RNA polymerase complex"/>
    <property type="evidence" value="ECO:0007669"/>
    <property type="project" value="UniProtKB-KW"/>
</dbReference>
<dbReference type="GO" id="GO:0005739">
    <property type="term" value="C:mitochondrion"/>
    <property type="evidence" value="ECO:0007669"/>
    <property type="project" value="GOC"/>
</dbReference>
<dbReference type="GO" id="GO:0003677">
    <property type="term" value="F:DNA binding"/>
    <property type="evidence" value="ECO:0007669"/>
    <property type="project" value="UniProtKB-UniRule"/>
</dbReference>
<dbReference type="GO" id="GO:0003899">
    <property type="term" value="F:DNA-directed RNA polymerase activity"/>
    <property type="evidence" value="ECO:0007669"/>
    <property type="project" value="UniProtKB-UniRule"/>
</dbReference>
<dbReference type="GO" id="GO:0032549">
    <property type="term" value="F:ribonucleoside binding"/>
    <property type="evidence" value="ECO:0007669"/>
    <property type="project" value="InterPro"/>
</dbReference>
<dbReference type="GO" id="GO:0006351">
    <property type="term" value="P:DNA-templated transcription"/>
    <property type="evidence" value="ECO:0007669"/>
    <property type="project" value="UniProtKB-UniRule"/>
</dbReference>
<dbReference type="CDD" id="cd00653">
    <property type="entry name" value="RNA_pol_B_RPB2"/>
    <property type="match status" value="1"/>
</dbReference>
<dbReference type="Gene3D" id="2.40.50.100">
    <property type="match status" value="1"/>
</dbReference>
<dbReference type="Gene3D" id="2.40.50.150">
    <property type="match status" value="1"/>
</dbReference>
<dbReference type="Gene3D" id="3.90.1100.10">
    <property type="match status" value="1"/>
</dbReference>
<dbReference type="Gene3D" id="2.30.150.10">
    <property type="entry name" value="DNA-directed RNA polymerase, beta subunit, external 1 domain"/>
    <property type="match status" value="1"/>
</dbReference>
<dbReference type="Gene3D" id="2.40.270.10">
    <property type="entry name" value="DNA-directed RNA polymerase, subunit 2, domain 6"/>
    <property type="match status" value="1"/>
</dbReference>
<dbReference type="Gene3D" id="3.90.1800.10">
    <property type="entry name" value="RNA polymerase alpha subunit dimerisation domain"/>
    <property type="match status" value="1"/>
</dbReference>
<dbReference type="Gene3D" id="3.90.1110.10">
    <property type="entry name" value="RNA polymerase Rpb2, domain 2"/>
    <property type="match status" value="1"/>
</dbReference>
<dbReference type="HAMAP" id="MF_01321">
    <property type="entry name" value="RNApol_bact_RpoB"/>
    <property type="match status" value="1"/>
</dbReference>
<dbReference type="InterPro" id="IPR042107">
    <property type="entry name" value="DNA-dir_RNA_pol_bsu_ext_1_sf"/>
</dbReference>
<dbReference type="InterPro" id="IPR015712">
    <property type="entry name" value="DNA-dir_RNA_pol_su2"/>
</dbReference>
<dbReference type="InterPro" id="IPR007120">
    <property type="entry name" value="DNA-dir_RNAP_su2_dom"/>
</dbReference>
<dbReference type="InterPro" id="IPR037033">
    <property type="entry name" value="DNA-dir_RNAP_su2_hyb_sf"/>
</dbReference>
<dbReference type="InterPro" id="IPR010243">
    <property type="entry name" value="RNA_pol_bsu_bac"/>
</dbReference>
<dbReference type="InterPro" id="IPR007121">
    <property type="entry name" value="RNA_pol_bsu_CS"/>
</dbReference>
<dbReference type="InterPro" id="IPR007642">
    <property type="entry name" value="RNA_pol_Rpb2_2"/>
</dbReference>
<dbReference type="InterPro" id="IPR037034">
    <property type="entry name" value="RNA_pol_Rpb2_2_sf"/>
</dbReference>
<dbReference type="InterPro" id="IPR007645">
    <property type="entry name" value="RNA_pol_Rpb2_3"/>
</dbReference>
<dbReference type="InterPro" id="IPR007641">
    <property type="entry name" value="RNA_pol_Rpb2_7"/>
</dbReference>
<dbReference type="InterPro" id="IPR014724">
    <property type="entry name" value="RNA_pol_RPB2_OB-fold"/>
</dbReference>
<dbReference type="NCBIfam" id="NF001616">
    <property type="entry name" value="PRK00405.1"/>
    <property type="match status" value="1"/>
</dbReference>
<dbReference type="PANTHER" id="PTHR20856">
    <property type="entry name" value="DNA-DIRECTED RNA POLYMERASE I SUBUNIT 2"/>
    <property type="match status" value="1"/>
</dbReference>
<dbReference type="Pfam" id="PF04561">
    <property type="entry name" value="RNA_pol_Rpb2_2"/>
    <property type="match status" value="1"/>
</dbReference>
<dbReference type="Pfam" id="PF04565">
    <property type="entry name" value="RNA_pol_Rpb2_3"/>
    <property type="match status" value="1"/>
</dbReference>
<dbReference type="Pfam" id="PF00562">
    <property type="entry name" value="RNA_pol_Rpb2_6"/>
    <property type="match status" value="1"/>
</dbReference>
<dbReference type="Pfam" id="PF04560">
    <property type="entry name" value="RNA_pol_Rpb2_7"/>
    <property type="match status" value="1"/>
</dbReference>
<dbReference type="SUPFAM" id="SSF64484">
    <property type="entry name" value="beta and beta-prime subunits of DNA dependent RNA-polymerase"/>
    <property type="match status" value="1"/>
</dbReference>
<dbReference type="PROSITE" id="PS01166">
    <property type="entry name" value="RNA_POL_BETA"/>
    <property type="match status" value="1"/>
</dbReference>
<keyword id="KW-0150">Chloroplast</keyword>
<keyword id="KW-0240">DNA-directed RNA polymerase</keyword>
<keyword id="KW-0548">Nucleotidyltransferase</keyword>
<keyword id="KW-0934">Plastid</keyword>
<keyword id="KW-1185">Reference proteome</keyword>
<keyword id="KW-0804">Transcription</keyword>
<keyword id="KW-0808">Transferase</keyword>
<accession>A1E9R4</accession>
<gene>
    <name evidence="1" type="primary">rpoB</name>
</gene>